<sequence length="295" mass="32234">MWFKRIGLFLLTNILVVVTISIVTSVLGIGPYLDANGLNLSSLVIFCFLWGMGGAFVSLLLSKFMAKMMMGVQIIDPRSASGAERELYSRVERLARAANLPMPEVGIYHSPEVNAFATGPSKSSSLVAVSSGLLQVMDNAEVEGVLAHELAHVANGDMVTMTLIQGIVNAFVMFFSRIISYALSTMVKDEMQYTVRLISNIVLSILFSILGSIVVAYFSRTREYRADAGGAKLVGRQNMIAALEKLRRTFDAPEDERGKEALATMKISGHNKWMALFSTHPPLEARIAALKNSGY</sequence>
<evidence type="ECO:0000255" key="1">
    <source>
        <dbReference type="HAMAP-Rule" id="MF_00188"/>
    </source>
</evidence>
<protein>
    <recommendedName>
        <fullName evidence="1">Protease HtpX homolog</fullName>
        <ecNumber evidence="1">3.4.24.-</ecNumber>
    </recommendedName>
</protein>
<feature type="chain" id="PRO_1000020881" description="Protease HtpX homolog">
    <location>
        <begin position="1"/>
        <end position="295"/>
    </location>
</feature>
<feature type="transmembrane region" description="Helical" evidence="1">
    <location>
        <begin position="6"/>
        <end position="26"/>
    </location>
</feature>
<feature type="transmembrane region" description="Helical" evidence="1">
    <location>
        <begin position="40"/>
        <end position="60"/>
    </location>
</feature>
<feature type="transmembrane region" description="Helical" evidence="1">
    <location>
        <begin position="163"/>
        <end position="183"/>
    </location>
</feature>
<feature type="transmembrane region" description="Helical" evidence="1">
    <location>
        <begin position="198"/>
        <end position="218"/>
    </location>
</feature>
<feature type="active site" evidence="1">
    <location>
        <position position="149"/>
    </location>
</feature>
<feature type="binding site" evidence="1">
    <location>
        <position position="148"/>
    </location>
    <ligand>
        <name>Zn(2+)</name>
        <dbReference type="ChEBI" id="CHEBI:29105"/>
        <note>catalytic</note>
    </ligand>
</feature>
<feature type="binding site" evidence="1">
    <location>
        <position position="152"/>
    </location>
    <ligand>
        <name>Zn(2+)</name>
        <dbReference type="ChEBI" id="CHEBI:29105"/>
        <note>catalytic</note>
    </ligand>
</feature>
<feature type="binding site" evidence="1">
    <location>
        <position position="223"/>
    </location>
    <ligand>
        <name>Zn(2+)</name>
        <dbReference type="ChEBI" id="CHEBI:29105"/>
        <note>catalytic</note>
    </ligand>
</feature>
<keyword id="KW-0997">Cell inner membrane</keyword>
<keyword id="KW-1003">Cell membrane</keyword>
<keyword id="KW-0378">Hydrolase</keyword>
<keyword id="KW-0472">Membrane</keyword>
<keyword id="KW-0479">Metal-binding</keyword>
<keyword id="KW-0482">Metalloprotease</keyword>
<keyword id="KW-0645">Protease</keyword>
<keyword id="KW-0812">Transmembrane</keyword>
<keyword id="KW-1133">Transmembrane helix</keyword>
<keyword id="KW-0862">Zinc</keyword>
<accession>Q04NG2</accession>
<organism>
    <name type="scientific">Leptospira borgpetersenii serovar Hardjo-bovis (strain JB197)</name>
    <dbReference type="NCBI Taxonomy" id="355277"/>
    <lineage>
        <taxon>Bacteria</taxon>
        <taxon>Pseudomonadati</taxon>
        <taxon>Spirochaetota</taxon>
        <taxon>Spirochaetia</taxon>
        <taxon>Leptospirales</taxon>
        <taxon>Leptospiraceae</taxon>
        <taxon>Leptospira</taxon>
    </lineage>
</organism>
<reference key="1">
    <citation type="journal article" date="2006" name="Proc. Natl. Acad. Sci. U.S.A.">
        <title>Genome reduction in Leptospira borgpetersenii reflects limited transmission potential.</title>
        <authorList>
            <person name="Bulach D.M."/>
            <person name="Zuerner R.L."/>
            <person name="Wilson P."/>
            <person name="Seemann T."/>
            <person name="McGrath A."/>
            <person name="Cullen P.A."/>
            <person name="Davis J."/>
            <person name="Johnson M."/>
            <person name="Kuczek E."/>
            <person name="Alt D.P."/>
            <person name="Peterson-Burch B."/>
            <person name="Coppel R.L."/>
            <person name="Rood J.I."/>
            <person name="Davies J.K."/>
            <person name="Adler B."/>
        </authorList>
    </citation>
    <scope>NUCLEOTIDE SEQUENCE [LARGE SCALE GENOMIC DNA]</scope>
    <source>
        <strain>JB197</strain>
    </source>
</reference>
<dbReference type="EC" id="3.4.24.-" evidence="1"/>
<dbReference type="EMBL" id="CP000351">
    <property type="protein sequence ID" value="ABJ77558.1"/>
    <property type="molecule type" value="Genomic_DNA"/>
</dbReference>
<dbReference type="RefSeq" id="WP_002726085.1">
    <property type="nucleotide sequence ID" value="NC_008511.1"/>
</dbReference>
<dbReference type="SMR" id="Q04NG2"/>
<dbReference type="GeneID" id="61175568"/>
<dbReference type="KEGG" id="lbj:LBJ_4171"/>
<dbReference type="HOGENOM" id="CLU_042266_1_0_12"/>
<dbReference type="Proteomes" id="UP000000656">
    <property type="component" value="Chromosome 2"/>
</dbReference>
<dbReference type="GO" id="GO:0005886">
    <property type="term" value="C:plasma membrane"/>
    <property type="evidence" value="ECO:0007669"/>
    <property type="project" value="UniProtKB-SubCell"/>
</dbReference>
<dbReference type="GO" id="GO:0004222">
    <property type="term" value="F:metalloendopeptidase activity"/>
    <property type="evidence" value="ECO:0007669"/>
    <property type="project" value="UniProtKB-UniRule"/>
</dbReference>
<dbReference type="GO" id="GO:0008270">
    <property type="term" value="F:zinc ion binding"/>
    <property type="evidence" value="ECO:0007669"/>
    <property type="project" value="UniProtKB-UniRule"/>
</dbReference>
<dbReference type="GO" id="GO:0006508">
    <property type="term" value="P:proteolysis"/>
    <property type="evidence" value="ECO:0007669"/>
    <property type="project" value="UniProtKB-KW"/>
</dbReference>
<dbReference type="CDD" id="cd07335">
    <property type="entry name" value="M48B_HtpX_like"/>
    <property type="match status" value="1"/>
</dbReference>
<dbReference type="Gene3D" id="3.30.2010.10">
    <property type="entry name" value="Metalloproteases ('zincins'), catalytic domain"/>
    <property type="match status" value="1"/>
</dbReference>
<dbReference type="HAMAP" id="MF_00188">
    <property type="entry name" value="Pept_M48_protease_HtpX"/>
    <property type="match status" value="1"/>
</dbReference>
<dbReference type="InterPro" id="IPR050083">
    <property type="entry name" value="HtpX_protease"/>
</dbReference>
<dbReference type="InterPro" id="IPR022919">
    <property type="entry name" value="Pept_M48_protease_HtpX"/>
</dbReference>
<dbReference type="InterPro" id="IPR001915">
    <property type="entry name" value="Peptidase_M48"/>
</dbReference>
<dbReference type="NCBIfam" id="NF003965">
    <property type="entry name" value="PRK05457.1"/>
    <property type="match status" value="1"/>
</dbReference>
<dbReference type="PANTHER" id="PTHR43221">
    <property type="entry name" value="PROTEASE HTPX"/>
    <property type="match status" value="1"/>
</dbReference>
<dbReference type="PANTHER" id="PTHR43221:SF1">
    <property type="entry name" value="PROTEASE HTPX"/>
    <property type="match status" value="1"/>
</dbReference>
<dbReference type="Pfam" id="PF01435">
    <property type="entry name" value="Peptidase_M48"/>
    <property type="match status" value="1"/>
</dbReference>
<gene>
    <name evidence="1" type="primary">htpX</name>
    <name type="ordered locus">LBJ_4171</name>
</gene>
<name>HTPX_LEPBJ</name>
<proteinExistence type="inferred from homology"/>
<comment type="cofactor">
    <cofactor evidence="1">
        <name>Zn(2+)</name>
        <dbReference type="ChEBI" id="CHEBI:29105"/>
    </cofactor>
    <text evidence="1">Binds 1 zinc ion per subunit.</text>
</comment>
<comment type="subcellular location">
    <subcellularLocation>
        <location evidence="1">Cell inner membrane</location>
        <topology evidence="1">Multi-pass membrane protein</topology>
    </subcellularLocation>
</comment>
<comment type="similarity">
    <text evidence="1">Belongs to the peptidase M48B family.</text>
</comment>